<proteinExistence type="inferred from homology"/>
<name>SYGA_THIDA</name>
<feature type="chain" id="PRO_1000047523" description="Glycine--tRNA ligase alpha subunit">
    <location>
        <begin position="1"/>
        <end position="312"/>
    </location>
</feature>
<gene>
    <name evidence="1" type="primary">glyQ</name>
    <name type="ordered locus">Tbd_2348</name>
</gene>
<keyword id="KW-0030">Aminoacyl-tRNA synthetase</keyword>
<keyword id="KW-0067">ATP-binding</keyword>
<keyword id="KW-0963">Cytoplasm</keyword>
<keyword id="KW-0436">Ligase</keyword>
<keyword id="KW-0547">Nucleotide-binding</keyword>
<keyword id="KW-0648">Protein biosynthesis</keyword>
<keyword id="KW-1185">Reference proteome</keyword>
<sequence>MNPTFQDIILTLQRYWGERGCALLQPYDMEVGAGTSHTATFLRALGPEPWKAAYVQPSRRPKDGRYGENPNRLQHYYQFQVVLKPAPADILELYLGSLEALGFDLRKNDVRFVEDDWENPTLGAWGLGWEVWLNGMEVTQFTYFQQVGGIDCKPITGEITYGLERLAMYLQGVESVFDLRWTDGLTYRDVYHQNEVEQSAYNFEHSDVGFLLTAFSAHEKKAQELMVAQLALPAYEQVLKAAHTFNLLDARGAISVTERAAYIGRIRNLARSVAKSYLDSRARLGFPMAPRAWADEVLANIEKQTQKKAAAA</sequence>
<dbReference type="EC" id="6.1.1.14" evidence="1"/>
<dbReference type="EMBL" id="CP000116">
    <property type="protein sequence ID" value="AAZ98301.1"/>
    <property type="molecule type" value="Genomic_DNA"/>
</dbReference>
<dbReference type="RefSeq" id="WP_011312860.1">
    <property type="nucleotide sequence ID" value="NC_007404.1"/>
</dbReference>
<dbReference type="SMR" id="Q3SGE9"/>
<dbReference type="STRING" id="292415.Tbd_2348"/>
<dbReference type="KEGG" id="tbd:Tbd_2348"/>
<dbReference type="eggNOG" id="COG0752">
    <property type="taxonomic scope" value="Bacteria"/>
</dbReference>
<dbReference type="HOGENOM" id="CLU_057066_1_0_4"/>
<dbReference type="OrthoDB" id="9802183at2"/>
<dbReference type="Proteomes" id="UP000008291">
    <property type="component" value="Chromosome"/>
</dbReference>
<dbReference type="GO" id="GO:0005829">
    <property type="term" value="C:cytosol"/>
    <property type="evidence" value="ECO:0007669"/>
    <property type="project" value="TreeGrafter"/>
</dbReference>
<dbReference type="GO" id="GO:0005524">
    <property type="term" value="F:ATP binding"/>
    <property type="evidence" value="ECO:0007669"/>
    <property type="project" value="UniProtKB-UniRule"/>
</dbReference>
<dbReference type="GO" id="GO:0004820">
    <property type="term" value="F:glycine-tRNA ligase activity"/>
    <property type="evidence" value="ECO:0007669"/>
    <property type="project" value="UniProtKB-UniRule"/>
</dbReference>
<dbReference type="GO" id="GO:0006426">
    <property type="term" value="P:glycyl-tRNA aminoacylation"/>
    <property type="evidence" value="ECO:0007669"/>
    <property type="project" value="UniProtKB-UniRule"/>
</dbReference>
<dbReference type="CDD" id="cd00733">
    <property type="entry name" value="GlyRS_alpha_core"/>
    <property type="match status" value="1"/>
</dbReference>
<dbReference type="FunFam" id="3.30.930.10:FF:000006">
    <property type="entry name" value="Glycine--tRNA ligase alpha subunit"/>
    <property type="match status" value="1"/>
</dbReference>
<dbReference type="Gene3D" id="3.30.930.10">
    <property type="entry name" value="Bira Bifunctional Protein, Domain 2"/>
    <property type="match status" value="1"/>
</dbReference>
<dbReference type="Gene3D" id="1.20.58.180">
    <property type="entry name" value="Class II aaRS and biotin synthetases, domain 2"/>
    <property type="match status" value="1"/>
</dbReference>
<dbReference type="HAMAP" id="MF_00254">
    <property type="entry name" value="Gly_tRNA_synth_alpha"/>
    <property type="match status" value="1"/>
</dbReference>
<dbReference type="InterPro" id="IPR045864">
    <property type="entry name" value="aa-tRNA-synth_II/BPL/LPL"/>
</dbReference>
<dbReference type="InterPro" id="IPR006194">
    <property type="entry name" value="Gly-tRNA-synth_heterodimer"/>
</dbReference>
<dbReference type="InterPro" id="IPR002310">
    <property type="entry name" value="Gly-tRNA_ligase_asu"/>
</dbReference>
<dbReference type="NCBIfam" id="TIGR00388">
    <property type="entry name" value="glyQ"/>
    <property type="match status" value="1"/>
</dbReference>
<dbReference type="NCBIfam" id="NF006827">
    <property type="entry name" value="PRK09348.1"/>
    <property type="match status" value="1"/>
</dbReference>
<dbReference type="PANTHER" id="PTHR30075:SF2">
    <property type="entry name" value="GLYCINE--TRNA LIGASE, CHLOROPLASTIC_MITOCHONDRIAL 2"/>
    <property type="match status" value="1"/>
</dbReference>
<dbReference type="PANTHER" id="PTHR30075">
    <property type="entry name" value="GLYCYL-TRNA SYNTHETASE"/>
    <property type="match status" value="1"/>
</dbReference>
<dbReference type="Pfam" id="PF02091">
    <property type="entry name" value="tRNA-synt_2e"/>
    <property type="match status" value="1"/>
</dbReference>
<dbReference type="PRINTS" id="PR01044">
    <property type="entry name" value="TRNASYNTHGA"/>
</dbReference>
<dbReference type="SUPFAM" id="SSF55681">
    <property type="entry name" value="Class II aaRS and biotin synthetases"/>
    <property type="match status" value="1"/>
</dbReference>
<dbReference type="PROSITE" id="PS50861">
    <property type="entry name" value="AA_TRNA_LIGASE_II_GLYAB"/>
    <property type="match status" value="1"/>
</dbReference>
<reference key="1">
    <citation type="journal article" date="2006" name="J. Bacteriol.">
        <title>The genome sequence of the obligately chemolithoautotrophic, facultatively anaerobic bacterium Thiobacillus denitrificans.</title>
        <authorList>
            <person name="Beller H.R."/>
            <person name="Chain P.S."/>
            <person name="Letain T.E."/>
            <person name="Chakicherla A."/>
            <person name="Larimer F.W."/>
            <person name="Richardson P.M."/>
            <person name="Coleman M.A."/>
            <person name="Wood A.P."/>
            <person name="Kelly D.P."/>
        </authorList>
    </citation>
    <scope>NUCLEOTIDE SEQUENCE [LARGE SCALE GENOMIC DNA]</scope>
    <source>
        <strain>ATCC 25259 / T1</strain>
    </source>
</reference>
<protein>
    <recommendedName>
        <fullName evidence="1">Glycine--tRNA ligase alpha subunit</fullName>
        <ecNumber evidence="1">6.1.1.14</ecNumber>
    </recommendedName>
    <alternativeName>
        <fullName evidence="1">Glycyl-tRNA synthetase alpha subunit</fullName>
        <shortName evidence="1">GlyRS</shortName>
    </alternativeName>
</protein>
<comment type="catalytic activity">
    <reaction evidence="1">
        <text>tRNA(Gly) + glycine + ATP = glycyl-tRNA(Gly) + AMP + diphosphate</text>
        <dbReference type="Rhea" id="RHEA:16013"/>
        <dbReference type="Rhea" id="RHEA-COMP:9664"/>
        <dbReference type="Rhea" id="RHEA-COMP:9683"/>
        <dbReference type="ChEBI" id="CHEBI:30616"/>
        <dbReference type="ChEBI" id="CHEBI:33019"/>
        <dbReference type="ChEBI" id="CHEBI:57305"/>
        <dbReference type="ChEBI" id="CHEBI:78442"/>
        <dbReference type="ChEBI" id="CHEBI:78522"/>
        <dbReference type="ChEBI" id="CHEBI:456215"/>
        <dbReference type="EC" id="6.1.1.14"/>
    </reaction>
</comment>
<comment type="subunit">
    <text evidence="1">Tetramer of two alpha and two beta subunits.</text>
</comment>
<comment type="subcellular location">
    <subcellularLocation>
        <location evidence="1">Cytoplasm</location>
    </subcellularLocation>
</comment>
<comment type="similarity">
    <text evidence="1">Belongs to the class-II aminoacyl-tRNA synthetase family.</text>
</comment>
<organism>
    <name type="scientific">Thiobacillus denitrificans (strain ATCC 25259 / T1)</name>
    <dbReference type="NCBI Taxonomy" id="292415"/>
    <lineage>
        <taxon>Bacteria</taxon>
        <taxon>Pseudomonadati</taxon>
        <taxon>Pseudomonadota</taxon>
        <taxon>Betaproteobacteria</taxon>
        <taxon>Nitrosomonadales</taxon>
        <taxon>Thiobacillaceae</taxon>
        <taxon>Thiobacillus</taxon>
    </lineage>
</organism>
<accession>Q3SGE9</accession>
<evidence type="ECO:0000255" key="1">
    <source>
        <dbReference type="HAMAP-Rule" id="MF_00254"/>
    </source>
</evidence>